<accession>Q6LZA2</accession>
<keyword id="KW-0067">ATP-binding</keyword>
<keyword id="KW-0963">Cytoplasm</keyword>
<keyword id="KW-0227">DNA damage</keyword>
<keyword id="KW-0228">DNA excision</keyword>
<keyword id="KW-0234">DNA repair</keyword>
<keyword id="KW-0267">Excision nuclease</keyword>
<keyword id="KW-0547">Nucleotide-binding</keyword>
<keyword id="KW-1185">Reference proteome</keyword>
<keyword id="KW-0742">SOS response</keyword>
<organism>
    <name type="scientific">Methanococcus maripaludis (strain DSM 14266 / JCM 13030 / NBRC 101832 / S2 / LL)</name>
    <dbReference type="NCBI Taxonomy" id="267377"/>
    <lineage>
        <taxon>Archaea</taxon>
        <taxon>Methanobacteriati</taxon>
        <taxon>Methanobacteriota</taxon>
        <taxon>Methanomada group</taxon>
        <taxon>Methanococci</taxon>
        <taxon>Methanococcales</taxon>
        <taxon>Methanococcaceae</taxon>
        <taxon>Methanococcus</taxon>
    </lineage>
</organism>
<name>UVRB_METMP</name>
<proteinExistence type="inferred from homology"/>
<gene>
    <name evidence="1" type="primary">uvrB</name>
    <name type="ordered locus">MMP0727</name>
</gene>
<reference key="1">
    <citation type="journal article" date="2004" name="J. Bacteriol.">
        <title>Complete genome sequence of the genetically tractable hydrogenotrophic methanogen Methanococcus maripaludis.</title>
        <authorList>
            <person name="Hendrickson E.L."/>
            <person name="Kaul R."/>
            <person name="Zhou Y."/>
            <person name="Bovee D."/>
            <person name="Chapman P."/>
            <person name="Chung J."/>
            <person name="Conway de Macario E."/>
            <person name="Dodsworth J.A."/>
            <person name="Gillett W."/>
            <person name="Graham D.E."/>
            <person name="Hackett M."/>
            <person name="Haydock A.K."/>
            <person name="Kang A."/>
            <person name="Land M.L."/>
            <person name="Levy R."/>
            <person name="Lie T.J."/>
            <person name="Major T.A."/>
            <person name="Moore B.C."/>
            <person name="Porat I."/>
            <person name="Palmeiri A."/>
            <person name="Rouse G."/>
            <person name="Saenphimmachak C."/>
            <person name="Soell D."/>
            <person name="Van Dien S."/>
            <person name="Wang T."/>
            <person name="Whitman W.B."/>
            <person name="Xia Q."/>
            <person name="Zhang Y."/>
            <person name="Larimer F.W."/>
            <person name="Olson M.V."/>
            <person name="Leigh J.A."/>
        </authorList>
    </citation>
    <scope>NUCLEOTIDE SEQUENCE [LARGE SCALE GENOMIC DNA]</scope>
    <source>
        <strain>DSM 14266 / JCM 13030 / NBRC 101832 / S2 / LL</strain>
    </source>
</reference>
<protein>
    <recommendedName>
        <fullName evidence="1">UvrABC system protein B</fullName>
        <shortName evidence="1">Protein UvrB</shortName>
    </recommendedName>
    <alternativeName>
        <fullName evidence="1">Excinuclease ABC subunit B</fullName>
    </alternativeName>
</protein>
<comment type="function">
    <text evidence="1">The UvrABC repair system catalyzes the recognition and processing of DNA lesions. A damage recognition complex composed of 2 UvrA and 2 UvrB subunits scans DNA for abnormalities. Upon binding of the UvrA(2)B(2) complex to a putative damaged site, the DNA wraps around one UvrB monomer. DNA wrap is dependent on ATP binding by UvrB and probably causes local melting of the DNA helix, facilitating insertion of UvrB beta-hairpin between the DNA strands. Then UvrB probes one DNA strand for the presence of a lesion. If a lesion is found the UvrA subunits dissociate and the UvrB-DNA preincision complex is formed. This complex is subsequently bound by UvrC and the second UvrB is released. If no lesion is found, the DNA wraps around the other UvrB subunit that will check the other stand for damage.</text>
</comment>
<comment type="subunit">
    <text evidence="1">Forms a heterotetramer with UvrA during the search for lesions. Interacts with UvrC in an incision complex.</text>
</comment>
<comment type="subcellular location">
    <subcellularLocation>
        <location evidence="1">Cytoplasm</location>
    </subcellularLocation>
</comment>
<comment type="domain">
    <text evidence="1">The beta-hairpin motif is involved in DNA binding.</text>
</comment>
<comment type="similarity">
    <text evidence="1">Belongs to the UvrB family.</text>
</comment>
<dbReference type="EMBL" id="BX950229">
    <property type="protein sequence ID" value="CAF30283.1"/>
    <property type="molecule type" value="Genomic_DNA"/>
</dbReference>
<dbReference type="RefSeq" id="WP_011170671.1">
    <property type="nucleotide sequence ID" value="NC_005791.1"/>
</dbReference>
<dbReference type="SMR" id="Q6LZA2"/>
<dbReference type="STRING" id="267377.MMP0727"/>
<dbReference type="EnsemblBacteria" id="CAF30283">
    <property type="protein sequence ID" value="CAF30283"/>
    <property type="gene ID" value="MMP0727"/>
</dbReference>
<dbReference type="GeneID" id="2761095"/>
<dbReference type="KEGG" id="mmp:MMP0727"/>
<dbReference type="PATRIC" id="fig|267377.15.peg.744"/>
<dbReference type="eggNOG" id="arCOG04748">
    <property type="taxonomic scope" value="Archaea"/>
</dbReference>
<dbReference type="HOGENOM" id="CLU_009621_2_1_2"/>
<dbReference type="OrthoDB" id="8371at2157"/>
<dbReference type="Proteomes" id="UP000000590">
    <property type="component" value="Chromosome"/>
</dbReference>
<dbReference type="GO" id="GO:0005737">
    <property type="term" value="C:cytoplasm"/>
    <property type="evidence" value="ECO:0007669"/>
    <property type="project" value="UniProtKB-SubCell"/>
</dbReference>
<dbReference type="GO" id="GO:0009380">
    <property type="term" value="C:excinuclease repair complex"/>
    <property type="evidence" value="ECO:0007669"/>
    <property type="project" value="InterPro"/>
</dbReference>
<dbReference type="GO" id="GO:0005524">
    <property type="term" value="F:ATP binding"/>
    <property type="evidence" value="ECO:0007669"/>
    <property type="project" value="UniProtKB-UniRule"/>
</dbReference>
<dbReference type="GO" id="GO:0016887">
    <property type="term" value="F:ATP hydrolysis activity"/>
    <property type="evidence" value="ECO:0007669"/>
    <property type="project" value="InterPro"/>
</dbReference>
<dbReference type="GO" id="GO:0003677">
    <property type="term" value="F:DNA binding"/>
    <property type="evidence" value="ECO:0007669"/>
    <property type="project" value="UniProtKB-UniRule"/>
</dbReference>
<dbReference type="GO" id="GO:0009381">
    <property type="term" value="F:excinuclease ABC activity"/>
    <property type="evidence" value="ECO:0007669"/>
    <property type="project" value="UniProtKB-UniRule"/>
</dbReference>
<dbReference type="GO" id="GO:0006289">
    <property type="term" value="P:nucleotide-excision repair"/>
    <property type="evidence" value="ECO:0007669"/>
    <property type="project" value="UniProtKB-UniRule"/>
</dbReference>
<dbReference type="GO" id="GO:0009432">
    <property type="term" value="P:SOS response"/>
    <property type="evidence" value="ECO:0007669"/>
    <property type="project" value="UniProtKB-UniRule"/>
</dbReference>
<dbReference type="CDD" id="cd17916">
    <property type="entry name" value="DEXHc_UvrB"/>
    <property type="match status" value="1"/>
</dbReference>
<dbReference type="CDD" id="cd18790">
    <property type="entry name" value="SF2_C_UvrB"/>
    <property type="match status" value="1"/>
</dbReference>
<dbReference type="Gene3D" id="3.40.50.300">
    <property type="entry name" value="P-loop containing nucleotide triphosphate hydrolases"/>
    <property type="match status" value="3"/>
</dbReference>
<dbReference type="Gene3D" id="4.10.860.10">
    <property type="entry name" value="UVR domain"/>
    <property type="match status" value="1"/>
</dbReference>
<dbReference type="HAMAP" id="MF_00204">
    <property type="entry name" value="UvrB"/>
    <property type="match status" value="1"/>
</dbReference>
<dbReference type="InterPro" id="IPR006935">
    <property type="entry name" value="Helicase/UvrB_N"/>
</dbReference>
<dbReference type="InterPro" id="IPR014001">
    <property type="entry name" value="Helicase_ATP-bd"/>
</dbReference>
<dbReference type="InterPro" id="IPR001650">
    <property type="entry name" value="Helicase_C-like"/>
</dbReference>
<dbReference type="InterPro" id="IPR027417">
    <property type="entry name" value="P-loop_NTPase"/>
</dbReference>
<dbReference type="InterPro" id="IPR001943">
    <property type="entry name" value="UVR_dom"/>
</dbReference>
<dbReference type="InterPro" id="IPR036876">
    <property type="entry name" value="UVR_dom_sf"/>
</dbReference>
<dbReference type="InterPro" id="IPR004807">
    <property type="entry name" value="UvrB"/>
</dbReference>
<dbReference type="InterPro" id="IPR041471">
    <property type="entry name" value="UvrB_inter"/>
</dbReference>
<dbReference type="InterPro" id="IPR024759">
    <property type="entry name" value="UvrB_YAD/RRR_dom"/>
</dbReference>
<dbReference type="NCBIfam" id="NF003673">
    <property type="entry name" value="PRK05298.1"/>
    <property type="match status" value="1"/>
</dbReference>
<dbReference type="NCBIfam" id="TIGR00631">
    <property type="entry name" value="uvrb"/>
    <property type="match status" value="1"/>
</dbReference>
<dbReference type="PANTHER" id="PTHR24029">
    <property type="entry name" value="UVRABC SYSTEM PROTEIN B"/>
    <property type="match status" value="1"/>
</dbReference>
<dbReference type="PANTHER" id="PTHR24029:SF0">
    <property type="entry name" value="UVRABC SYSTEM PROTEIN B"/>
    <property type="match status" value="1"/>
</dbReference>
<dbReference type="Pfam" id="PF00271">
    <property type="entry name" value="Helicase_C"/>
    <property type="match status" value="1"/>
</dbReference>
<dbReference type="Pfam" id="PF04851">
    <property type="entry name" value="ResIII"/>
    <property type="match status" value="1"/>
</dbReference>
<dbReference type="Pfam" id="PF02151">
    <property type="entry name" value="UVR"/>
    <property type="match status" value="1"/>
</dbReference>
<dbReference type="Pfam" id="PF12344">
    <property type="entry name" value="UvrB"/>
    <property type="match status" value="1"/>
</dbReference>
<dbReference type="Pfam" id="PF17757">
    <property type="entry name" value="UvrB_inter"/>
    <property type="match status" value="1"/>
</dbReference>
<dbReference type="SMART" id="SM00487">
    <property type="entry name" value="DEXDc"/>
    <property type="match status" value="1"/>
</dbReference>
<dbReference type="SMART" id="SM00490">
    <property type="entry name" value="HELICc"/>
    <property type="match status" value="1"/>
</dbReference>
<dbReference type="SUPFAM" id="SSF46600">
    <property type="entry name" value="C-terminal UvrC-binding domain of UvrB"/>
    <property type="match status" value="1"/>
</dbReference>
<dbReference type="SUPFAM" id="SSF52540">
    <property type="entry name" value="P-loop containing nucleoside triphosphate hydrolases"/>
    <property type="match status" value="2"/>
</dbReference>
<dbReference type="PROSITE" id="PS51192">
    <property type="entry name" value="HELICASE_ATP_BIND_1"/>
    <property type="match status" value="1"/>
</dbReference>
<dbReference type="PROSITE" id="PS51194">
    <property type="entry name" value="HELICASE_CTER"/>
    <property type="match status" value="1"/>
</dbReference>
<dbReference type="PROSITE" id="PS50151">
    <property type="entry name" value="UVR"/>
    <property type="match status" value="1"/>
</dbReference>
<sequence length="646" mass="74765">MSSPDFKLKAEFKPKGSQLEAIAGLVKDLEKNPEKSKQTLLGVTGSGKTFTIANVIEKVQKPTLVIAHNKTLAAQLYNEFKEFFPENRVEYFVSYYDYYQPESYIPQKDQYIEKDAQINPKIEQMRLRATSAILSRRDVIIVASVSCIYGLGNPELFKEMGFELKVGEKIKRSDIIEKLVDIQYERNDMELVPGRFRVKGDTLDIIPGYQDDILRVEMFGDEIDRIYELDPKNMSKKHEIDSFYMYPAKHFVIPEEDKKNAINSILKELDEWLPNLDMLKSHRLKQKTLYDIEMIEETGSCKGIENYSRHFENRKEGEPAYCLLDYFPEDFLIVIDESHQTIPQIRGMYKGDRSRKQSLIDYGFRLPSAYDNRPLKFEEFKKYMNNVIFVSATPGEYELDNSNQVVEQIIRPTGLLDPEVEIRPIENQVEDIIKETEKMVEKGERVLITTLTKRLAEELTEYLAKRNVKARYLHSDIDTIERTEIIRNLRLGKFDCLVGINLLREGLDIPEVGFVGILDADKEGFLRNDKSLIQTIGRAARNANSKVVLYAGKMTDSIKKAVSETERRRKLQKEHNEKHNITPQTIVKPIREKVVDISDVKHIPVADIPNVIVELEAEMYEAAEALEFEKAIKIRDTIAKLKKKIK</sequence>
<evidence type="ECO:0000255" key="1">
    <source>
        <dbReference type="HAMAP-Rule" id="MF_00204"/>
    </source>
</evidence>
<feature type="chain" id="PRO_0000227388" description="UvrABC system protein B">
    <location>
        <begin position="1"/>
        <end position="646"/>
    </location>
</feature>
<feature type="domain" description="Helicase ATP-binding" evidence="1">
    <location>
        <begin position="29"/>
        <end position="411"/>
    </location>
</feature>
<feature type="domain" description="Helicase C-terminal" evidence="1">
    <location>
        <begin position="428"/>
        <end position="590"/>
    </location>
</feature>
<feature type="domain" description="UVR" evidence="1">
    <location>
        <begin position="609"/>
        <end position="644"/>
    </location>
</feature>
<feature type="short sequence motif" description="Beta-hairpin">
    <location>
        <begin position="95"/>
        <end position="118"/>
    </location>
</feature>
<feature type="binding site" evidence="1">
    <location>
        <begin position="42"/>
        <end position="49"/>
    </location>
    <ligand>
        <name>ATP</name>
        <dbReference type="ChEBI" id="CHEBI:30616"/>
    </ligand>
</feature>